<gene>
    <name evidence="1" type="primary">rpsG</name>
    <name type="ordered locus">NMC0126</name>
</gene>
<comment type="function">
    <text evidence="1">One of the primary rRNA binding proteins, it binds directly to 16S rRNA where it nucleates assembly of the head domain of the 30S subunit. Is located at the subunit interface close to the decoding center, probably blocks exit of the E-site tRNA.</text>
</comment>
<comment type="subunit">
    <text evidence="1">Part of the 30S ribosomal subunit. Contacts proteins S9 and S11.</text>
</comment>
<comment type="similarity">
    <text evidence="1">Belongs to the universal ribosomal protein uS7 family.</text>
</comment>
<organism>
    <name type="scientific">Neisseria meningitidis serogroup C / serotype 2a (strain ATCC 700532 / DSM 15464 / FAM18)</name>
    <dbReference type="NCBI Taxonomy" id="272831"/>
    <lineage>
        <taxon>Bacteria</taxon>
        <taxon>Pseudomonadati</taxon>
        <taxon>Pseudomonadota</taxon>
        <taxon>Betaproteobacteria</taxon>
        <taxon>Neisseriales</taxon>
        <taxon>Neisseriaceae</taxon>
        <taxon>Neisseria</taxon>
    </lineage>
</organism>
<protein>
    <recommendedName>
        <fullName evidence="1">Small ribosomal subunit protein uS7</fullName>
    </recommendedName>
    <alternativeName>
        <fullName evidence="2">30S ribosomal protein S7</fullName>
    </alternativeName>
</protein>
<reference key="1">
    <citation type="journal article" date="2007" name="PLoS Genet.">
        <title>Meningococcal genetic variation mechanisms viewed through comparative analysis of serogroup C strain FAM18.</title>
        <authorList>
            <person name="Bentley S.D."/>
            <person name="Vernikos G.S."/>
            <person name="Snyder L.A.S."/>
            <person name="Churcher C."/>
            <person name="Arrowsmith C."/>
            <person name="Chillingworth T."/>
            <person name="Cronin A."/>
            <person name="Davis P.H."/>
            <person name="Holroyd N.E."/>
            <person name="Jagels K."/>
            <person name="Maddison M."/>
            <person name="Moule S."/>
            <person name="Rabbinowitsch E."/>
            <person name="Sharp S."/>
            <person name="Unwin L."/>
            <person name="Whitehead S."/>
            <person name="Quail M.A."/>
            <person name="Achtman M."/>
            <person name="Barrell B.G."/>
            <person name="Saunders N.J."/>
            <person name="Parkhill J."/>
        </authorList>
    </citation>
    <scope>NUCLEOTIDE SEQUENCE [LARGE SCALE GENOMIC DNA]</scope>
    <source>
        <strain>ATCC 700532 / DSM 15464 / FAM18</strain>
    </source>
</reference>
<evidence type="ECO:0000255" key="1">
    <source>
        <dbReference type="HAMAP-Rule" id="MF_00480"/>
    </source>
</evidence>
<evidence type="ECO:0000305" key="2"/>
<feature type="chain" id="PRO_1000014242" description="Small ribosomal subunit protein uS7">
    <location>
        <begin position="1"/>
        <end position="156"/>
    </location>
</feature>
<accession>A1KRG9</accession>
<proteinExistence type="inferred from homology"/>
<dbReference type="EMBL" id="AM421808">
    <property type="protein sequence ID" value="CAM09445.1"/>
    <property type="molecule type" value="Genomic_DNA"/>
</dbReference>
<dbReference type="RefSeq" id="WP_002215391.1">
    <property type="nucleotide sequence ID" value="NC_008767.1"/>
</dbReference>
<dbReference type="SMR" id="A1KRG9"/>
<dbReference type="GeneID" id="93387211"/>
<dbReference type="KEGG" id="nmc:NMC0126"/>
<dbReference type="HOGENOM" id="CLU_072226_1_1_4"/>
<dbReference type="Proteomes" id="UP000002286">
    <property type="component" value="Chromosome"/>
</dbReference>
<dbReference type="GO" id="GO:0015935">
    <property type="term" value="C:small ribosomal subunit"/>
    <property type="evidence" value="ECO:0007669"/>
    <property type="project" value="InterPro"/>
</dbReference>
<dbReference type="GO" id="GO:0019843">
    <property type="term" value="F:rRNA binding"/>
    <property type="evidence" value="ECO:0007669"/>
    <property type="project" value="UniProtKB-UniRule"/>
</dbReference>
<dbReference type="GO" id="GO:0003735">
    <property type="term" value="F:structural constituent of ribosome"/>
    <property type="evidence" value="ECO:0007669"/>
    <property type="project" value="InterPro"/>
</dbReference>
<dbReference type="GO" id="GO:0000049">
    <property type="term" value="F:tRNA binding"/>
    <property type="evidence" value="ECO:0007669"/>
    <property type="project" value="UniProtKB-UniRule"/>
</dbReference>
<dbReference type="GO" id="GO:0006412">
    <property type="term" value="P:translation"/>
    <property type="evidence" value="ECO:0007669"/>
    <property type="project" value="UniProtKB-UniRule"/>
</dbReference>
<dbReference type="CDD" id="cd14869">
    <property type="entry name" value="uS7_Bacteria"/>
    <property type="match status" value="1"/>
</dbReference>
<dbReference type="FunFam" id="1.10.455.10:FF:000001">
    <property type="entry name" value="30S ribosomal protein S7"/>
    <property type="match status" value="1"/>
</dbReference>
<dbReference type="Gene3D" id="1.10.455.10">
    <property type="entry name" value="Ribosomal protein S7 domain"/>
    <property type="match status" value="1"/>
</dbReference>
<dbReference type="HAMAP" id="MF_00480_B">
    <property type="entry name" value="Ribosomal_uS7_B"/>
    <property type="match status" value="1"/>
</dbReference>
<dbReference type="InterPro" id="IPR000235">
    <property type="entry name" value="Ribosomal_uS7"/>
</dbReference>
<dbReference type="InterPro" id="IPR005717">
    <property type="entry name" value="Ribosomal_uS7_bac/org-type"/>
</dbReference>
<dbReference type="InterPro" id="IPR020606">
    <property type="entry name" value="Ribosomal_uS7_CS"/>
</dbReference>
<dbReference type="InterPro" id="IPR023798">
    <property type="entry name" value="Ribosomal_uS7_dom"/>
</dbReference>
<dbReference type="InterPro" id="IPR036823">
    <property type="entry name" value="Ribosomal_uS7_dom_sf"/>
</dbReference>
<dbReference type="NCBIfam" id="TIGR01029">
    <property type="entry name" value="rpsG_bact"/>
    <property type="match status" value="1"/>
</dbReference>
<dbReference type="PANTHER" id="PTHR11205">
    <property type="entry name" value="RIBOSOMAL PROTEIN S7"/>
    <property type="match status" value="1"/>
</dbReference>
<dbReference type="Pfam" id="PF00177">
    <property type="entry name" value="Ribosomal_S7"/>
    <property type="match status" value="1"/>
</dbReference>
<dbReference type="PIRSF" id="PIRSF002122">
    <property type="entry name" value="RPS7p_RPS7a_RPS5e_RPS7o"/>
    <property type="match status" value="1"/>
</dbReference>
<dbReference type="SUPFAM" id="SSF47973">
    <property type="entry name" value="Ribosomal protein S7"/>
    <property type="match status" value="1"/>
</dbReference>
<dbReference type="PROSITE" id="PS00052">
    <property type="entry name" value="RIBOSOMAL_S7"/>
    <property type="match status" value="1"/>
</dbReference>
<keyword id="KW-0687">Ribonucleoprotein</keyword>
<keyword id="KW-0689">Ribosomal protein</keyword>
<keyword id="KW-0694">RNA-binding</keyword>
<keyword id="KW-0699">rRNA-binding</keyword>
<keyword id="KW-0820">tRNA-binding</keyword>
<name>RS7_NEIMF</name>
<sequence>MPRRREVPKRDVLPDPKFGSVELTKFMNVLMIDGKKSVAERIVYGALEQIEKKTGKVAIEVFNEAIANAKPIVEVKSRRVGGANYQVPVEVRPSRRLALAMRWVRDAARKRGEKSMDLRLAGELIDASEGRGGALKKREEVHRMAEANKAFSHFRF</sequence>